<evidence type="ECO:0000255" key="1">
    <source>
        <dbReference type="HAMAP-Rule" id="MF_01961"/>
    </source>
</evidence>
<evidence type="ECO:0000256" key="2">
    <source>
        <dbReference type="SAM" id="MobiDB-lite"/>
    </source>
</evidence>
<comment type="function">
    <text evidence="1">Bifunctional enzyme with both catalase and broad-spectrum peroxidase activity.</text>
</comment>
<comment type="catalytic activity">
    <reaction evidence="1">
        <text>H2O2 + AH2 = A + 2 H2O</text>
        <dbReference type="Rhea" id="RHEA:30275"/>
        <dbReference type="ChEBI" id="CHEBI:13193"/>
        <dbReference type="ChEBI" id="CHEBI:15377"/>
        <dbReference type="ChEBI" id="CHEBI:16240"/>
        <dbReference type="ChEBI" id="CHEBI:17499"/>
        <dbReference type="EC" id="1.11.1.21"/>
    </reaction>
</comment>
<comment type="catalytic activity">
    <reaction evidence="1">
        <text>2 H2O2 = O2 + 2 H2O</text>
        <dbReference type="Rhea" id="RHEA:20309"/>
        <dbReference type="ChEBI" id="CHEBI:15377"/>
        <dbReference type="ChEBI" id="CHEBI:15379"/>
        <dbReference type="ChEBI" id="CHEBI:16240"/>
        <dbReference type="EC" id="1.11.1.21"/>
    </reaction>
</comment>
<comment type="cofactor">
    <cofactor evidence="1">
        <name>heme b</name>
        <dbReference type="ChEBI" id="CHEBI:60344"/>
    </cofactor>
    <text evidence="1">Binds 1 heme b (iron(II)-protoporphyrin IX) group per dimer.</text>
</comment>
<comment type="subunit">
    <text evidence="1">Homodimer or homotetramer.</text>
</comment>
<comment type="PTM">
    <text evidence="1">Formation of the three residue Trp-Tyr-Met cross-link is important for the catalase, but not the peroxidase activity of the enzyme.</text>
</comment>
<comment type="similarity">
    <text evidence="1">Belongs to the peroxidase family. Peroxidase/catalase subfamily.</text>
</comment>
<proteinExistence type="inferred from homology"/>
<name>KATG_SALSV</name>
<reference key="1">
    <citation type="journal article" date="2011" name="J. Bacteriol.">
        <title>Comparative genomics of 28 Salmonella enterica isolates: evidence for CRISPR-mediated adaptive sublineage evolution.</title>
        <authorList>
            <person name="Fricke W.F."/>
            <person name="Mammel M.K."/>
            <person name="McDermott P.F."/>
            <person name="Tartera C."/>
            <person name="White D.G."/>
            <person name="Leclerc J.E."/>
            <person name="Ravel J."/>
            <person name="Cebula T.A."/>
        </authorList>
    </citation>
    <scope>NUCLEOTIDE SEQUENCE [LARGE SCALE GENOMIC DNA]</scope>
    <source>
        <strain>CVM19633</strain>
    </source>
</reference>
<keyword id="KW-0349">Heme</keyword>
<keyword id="KW-0376">Hydrogen peroxide</keyword>
<keyword id="KW-0408">Iron</keyword>
<keyword id="KW-0479">Metal-binding</keyword>
<keyword id="KW-0560">Oxidoreductase</keyword>
<keyword id="KW-0575">Peroxidase</keyword>
<protein>
    <recommendedName>
        <fullName evidence="1">Catalase-peroxidase</fullName>
        <shortName evidence="1">CP</shortName>
        <ecNumber evidence="1">1.11.1.21</ecNumber>
    </recommendedName>
    <alternativeName>
        <fullName evidence="1">Peroxidase/catalase</fullName>
    </alternativeName>
</protein>
<dbReference type="EC" id="1.11.1.21" evidence="1"/>
<dbReference type="EMBL" id="CP001127">
    <property type="protein sequence ID" value="ACF88957.1"/>
    <property type="molecule type" value="Genomic_DNA"/>
</dbReference>
<dbReference type="RefSeq" id="WP_000108114.1">
    <property type="nucleotide sequence ID" value="NC_011094.1"/>
</dbReference>
<dbReference type="SMR" id="B4TQG7"/>
<dbReference type="KEGG" id="sew:SeSA_A4324"/>
<dbReference type="HOGENOM" id="CLU_025424_2_0_6"/>
<dbReference type="Proteomes" id="UP000001865">
    <property type="component" value="Chromosome"/>
</dbReference>
<dbReference type="GO" id="GO:0005829">
    <property type="term" value="C:cytosol"/>
    <property type="evidence" value="ECO:0007669"/>
    <property type="project" value="TreeGrafter"/>
</dbReference>
<dbReference type="GO" id="GO:0004096">
    <property type="term" value="F:catalase activity"/>
    <property type="evidence" value="ECO:0007669"/>
    <property type="project" value="UniProtKB-UniRule"/>
</dbReference>
<dbReference type="GO" id="GO:0020037">
    <property type="term" value="F:heme binding"/>
    <property type="evidence" value="ECO:0007669"/>
    <property type="project" value="InterPro"/>
</dbReference>
<dbReference type="GO" id="GO:0046872">
    <property type="term" value="F:metal ion binding"/>
    <property type="evidence" value="ECO:0007669"/>
    <property type="project" value="UniProtKB-KW"/>
</dbReference>
<dbReference type="GO" id="GO:0070301">
    <property type="term" value="P:cellular response to hydrogen peroxide"/>
    <property type="evidence" value="ECO:0007669"/>
    <property type="project" value="TreeGrafter"/>
</dbReference>
<dbReference type="GO" id="GO:0042744">
    <property type="term" value="P:hydrogen peroxide catabolic process"/>
    <property type="evidence" value="ECO:0007669"/>
    <property type="project" value="UniProtKB-KW"/>
</dbReference>
<dbReference type="CDD" id="cd08200">
    <property type="entry name" value="catalase_peroxidase_2"/>
    <property type="match status" value="1"/>
</dbReference>
<dbReference type="FunFam" id="1.10.420.10:FF:000002">
    <property type="entry name" value="Catalase-peroxidase"/>
    <property type="match status" value="1"/>
</dbReference>
<dbReference type="FunFam" id="1.10.420.10:FF:000004">
    <property type="entry name" value="Catalase-peroxidase"/>
    <property type="match status" value="1"/>
</dbReference>
<dbReference type="FunFam" id="1.10.520.10:FF:000002">
    <property type="entry name" value="Catalase-peroxidase"/>
    <property type="match status" value="1"/>
</dbReference>
<dbReference type="Gene3D" id="1.10.520.10">
    <property type="match status" value="2"/>
</dbReference>
<dbReference type="Gene3D" id="1.10.420.10">
    <property type="entry name" value="Peroxidase, domain 2"/>
    <property type="match status" value="2"/>
</dbReference>
<dbReference type="HAMAP" id="MF_01961">
    <property type="entry name" value="Catal_peroxid"/>
    <property type="match status" value="1"/>
</dbReference>
<dbReference type="InterPro" id="IPR000763">
    <property type="entry name" value="Catalase_peroxidase"/>
</dbReference>
<dbReference type="InterPro" id="IPR002016">
    <property type="entry name" value="Haem_peroxidase"/>
</dbReference>
<dbReference type="InterPro" id="IPR010255">
    <property type="entry name" value="Haem_peroxidase_sf"/>
</dbReference>
<dbReference type="InterPro" id="IPR019794">
    <property type="entry name" value="Peroxidases_AS"/>
</dbReference>
<dbReference type="InterPro" id="IPR019793">
    <property type="entry name" value="Peroxidases_heam-ligand_BS"/>
</dbReference>
<dbReference type="NCBIfam" id="TIGR00198">
    <property type="entry name" value="cat_per_HPI"/>
    <property type="match status" value="1"/>
</dbReference>
<dbReference type="NCBIfam" id="NF011635">
    <property type="entry name" value="PRK15061.1"/>
    <property type="match status" value="1"/>
</dbReference>
<dbReference type="PANTHER" id="PTHR30555:SF0">
    <property type="entry name" value="CATALASE-PEROXIDASE"/>
    <property type="match status" value="1"/>
</dbReference>
<dbReference type="PANTHER" id="PTHR30555">
    <property type="entry name" value="HYDROPEROXIDASE I, BIFUNCTIONAL CATALASE-PEROXIDASE"/>
    <property type="match status" value="1"/>
</dbReference>
<dbReference type="Pfam" id="PF00141">
    <property type="entry name" value="peroxidase"/>
    <property type="match status" value="2"/>
</dbReference>
<dbReference type="PRINTS" id="PR00460">
    <property type="entry name" value="BPEROXIDASE"/>
</dbReference>
<dbReference type="PRINTS" id="PR00458">
    <property type="entry name" value="PEROXIDASE"/>
</dbReference>
<dbReference type="SUPFAM" id="SSF48113">
    <property type="entry name" value="Heme-dependent peroxidases"/>
    <property type="match status" value="2"/>
</dbReference>
<dbReference type="PROSITE" id="PS00435">
    <property type="entry name" value="PEROXIDASE_1"/>
    <property type="match status" value="1"/>
</dbReference>
<dbReference type="PROSITE" id="PS00436">
    <property type="entry name" value="PEROXIDASE_2"/>
    <property type="match status" value="1"/>
</dbReference>
<dbReference type="PROSITE" id="PS50873">
    <property type="entry name" value="PEROXIDASE_4"/>
    <property type="match status" value="1"/>
</dbReference>
<sequence length="726" mass="79655">MSTTDDTHNTLSTGKCPFHQGGHDRSAGAGTASRDWWPNQLRVDLLNQHSNRSNPLGEDFDYRKEFSKLDYSALKGDLKALLTDSQPWWPADWGSYVGLFIRMAWHGAGTYRSIDGRGGAGRGQQRFAPLNSWPDNVSLDKARRLLWPIKQKYGQKISWADLFILAGNVALENSGFRTFGFGAGREDVWEPDLDVNWGDEKAWLTHRHPEALAKAPLGATEMGLIYVNPEGPDHSGEPLSAAAAIRATFGNMGMNDEETVALIAGGHTLGKTHGAAAASHVGADPEAAPIEAQGLGWASSYGSGVGADAITSGLEVVWTQTPTQWSNYFFENLFKYEWVQTRSPAGAIQFEAVDAPDIIPDPFDPSKKRKPTMLVTDLTLRFDPEFEKISRRFLNDPQAFNEAFARAWFKLTHRDMGPKARYIGPEVPKEDLIWQDPLPQPLYQPTQEDIINLKAAIAASGLSISEMVSVAWASASTFRGGDKRGGANGARLALAPQRDWEVNAVAARVLPVLEEIQKTTNKASLADIIVLAGVVGIEQAAAAAGVSISVPFAPGRVDARQDQTDIEMFSLLEPIADGFRNYRARLDVSTTESLLIDKAQQLTLTAPEMTVLVGGMRVLGTNFDGSQNGVFTDRPGVLSTDFFANLLDMRYEWKPTDDANELFEGRDRLTGEVKYTATRADLVFGSNSVLRALAEVYACSDAHEKFVKDFVAAWVKVMNLDRFDLL</sequence>
<organism>
    <name type="scientific">Salmonella schwarzengrund (strain CVM19633)</name>
    <dbReference type="NCBI Taxonomy" id="439843"/>
    <lineage>
        <taxon>Bacteria</taxon>
        <taxon>Pseudomonadati</taxon>
        <taxon>Pseudomonadota</taxon>
        <taxon>Gammaproteobacteria</taxon>
        <taxon>Enterobacterales</taxon>
        <taxon>Enterobacteriaceae</taxon>
        <taxon>Salmonella</taxon>
    </lineage>
</organism>
<accession>B4TQG7</accession>
<feature type="chain" id="PRO_0000354911" description="Catalase-peroxidase">
    <location>
        <begin position="1"/>
        <end position="726"/>
    </location>
</feature>
<feature type="region of interest" description="Disordered" evidence="2">
    <location>
        <begin position="1"/>
        <end position="33"/>
    </location>
</feature>
<feature type="active site" description="Proton acceptor" evidence="1">
    <location>
        <position position="106"/>
    </location>
</feature>
<feature type="binding site" description="axial binding residue" evidence="1">
    <location>
        <position position="267"/>
    </location>
    <ligand>
        <name>heme b</name>
        <dbReference type="ChEBI" id="CHEBI:60344"/>
    </ligand>
    <ligandPart>
        <name>Fe</name>
        <dbReference type="ChEBI" id="CHEBI:18248"/>
    </ligandPart>
</feature>
<feature type="site" description="Transition state stabilizer" evidence="1">
    <location>
        <position position="102"/>
    </location>
</feature>
<feature type="cross-link" description="Tryptophyl-tyrosyl-methioninium (Trp-Tyr) (with M-252)" evidence="1">
    <location>
        <begin position="105"/>
        <end position="226"/>
    </location>
</feature>
<feature type="cross-link" description="Tryptophyl-tyrosyl-methioninium (Tyr-Met) (with W-105)" evidence="1">
    <location>
        <begin position="226"/>
        <end position="252"/>
    </location>
</feature>
<gene>
    <name evidence="1" type="primary">katG</name>
    <name type="ordered locus">SeSA_A4324</name>
</gene>